<dbReference type="EMBL" id="M76432">
    <property type="protein sequence ID" value="AAA30142.1"/>
    <property type="molecule type" value="Genomic_DNA"/>
</dbReference>
<dbReference type="EMBL" id="M57303">
    <property type="protein sequence ID" value="AAA30137.1"/>
    <property type="molecule type" value="mRNA"/>
</dbReference>
<dbReference type="PIR" id="A48462">
    <property type="entry name" value="A48462"/>
</dbReference>
<dbReference type="PIR" id="PS0424">
    <property type="entry name" value="PS0424"/>
</dbReference>
<dbReference type="VEuPathDB" id="ToxoDB:TGARI_310780"/>
<dbReference type="VEuPathDB" id="ToxoDB:TGCAST_310780"/>
<dbReference type="VEuPathDB" id="ToxoDB:TGCOUG_310780"/>
<dbReference type="VEuPathDB" id="ToxoDB:TGDOM2_310780"/>
<dbReference type="VEuPathDB" id="ToxoDB:TGFOU_310780"/>
<dbReference type="VEuPathDB" id="ToxoDB:TGGT1_310780"/>
<dbReference type="VEuPathDB" id="ToxoDB:TGMAS_310780"/>
<dbReference type="VEuPathDB" id="ToxoDB:TGME49_310780"/>
<dbReference type="VEuPathDB" id="ToxoDB:TGP89_310780"/>
<dbReference type="VEuPathDB" id="ToxoDB:TGPRC2_310780"/>
<dbReference type="VEuPathDB" id="ToxoDB:TGRH88_050290"/>
<dbReference type="VEuPathDB" id="ToxoDB:TGRUB_310780"/>
<dbReference type="VEuPathDB" id="ToxoDB:TGVAND_310780"/>
<dbReference type="VEuPathDB" id="ToxoDB:TGVEG_310780"/>
<dbReference type="GO" id="GO:0016020">
    <property type="term" value="C:membrane"/>
    <property type="evidence" value="ECO:0007669"/>
    <property type="project" value="UniProtKB-KW"/>
</dbReference>
<dbReference type="GO" id="GO:0020005">
    <property type="term" value="C:symbiont-containing vacuole membrane"/>
    <property type="evidence" value="ECO:0007669"/>
    <property type="project" value="UniProtKB-SubCell"/>
</dbReference>
<dbReference type="GO" id="GO:0030133">
    <property type="term" value="C:transport vesicle"/>
    <property type="evidence" value="ECO:0007669"/>
    <property type="project" value="UniProtKB-SubCell"/>
</dbReference>
<reference key="1">
    <citation type="journal article" date="1992" name="Mol. Biochem. Parasitol.">
        <title>Molecular cloning of GRA4, a Toxoplasma gondii dense granule protein, recognized by mucosal IgA antibodies.</title>
        <authorList>
            <person name="Mevelec M.-N."/>
            <person name="Chardes T."/>
            <person name="Mercereau-Puijalon O."/>
            <person name="Bourguin I."/>
            <person name="Achbarou A."/>
            <person name="Dubremetz J.-F."/>
            <person name="Bout D."/>
        </authorList>
    </citation>
    <scope>NUCLEOTIDE SEQUENCE [GENOMIC DNA]</scope>
    <source>
        <strain>RH</strain>
    </source>
</reference>
<reference key="2">
    <citation type="journal article" date="1991" name="Gene">
        <title>Cloning of Toxoplasma gondii gene fragments encoding diagnostic antigens.</title>
        <authorList>
            <person name="Johnson A.M."/>
            <person name="Illana S."/>
        </authorList>
    </citation>
    <scope>NUCLEOTIDE SEQUENCE [MRNA] OF 290-345</scope>
    <source>
        <strain>RH</strain>
    </source>
</reference>
<organism>
    <name type="scientific">Toxoplasma gondii</name>
    <dbReference type="NCBI Taxonomy" id="5811"/>
    <lineage>
        <taxon>Eukaryota</taxon>
        <taxon>Sar</taxon>
        <taxon>Alveolata</taxon>
        <taxon>Apicomplexa</taxon>
        <taxon>Conoidasida</taxon>
        <taxon>Coccidia</taxon>
        <taxon>Eucoccidiorida</taxon>
        <taxon>Eimeriorina</taxon>
        <taxon>Sarcocystidae</taxon>
        <taxon>Toxoplasma</taxon>
    </lineage>
</organism>
<proteinExistence type="evidence at transcript level"/>
<comment type="function">
    <text>Major granular component involved in excreted-secreted antigen (ESA) immunity.</text>
</comment>
<comment type="subcellular location">
    <subcellularLocation>
        <location>Secreted</location>
    </subcellularLocation>
    <subcellularLocation>
        <location>Parasitophorous vacuole lumen</location>
    </subcellularLocation>
    <subcellularLocation>
        <location>Parasitophorous vacuole membrane</location>
    </subcellularLocation>
    <subcellularLocation>
        <location>Cytoplasmic vesicle</location>
        <location>Secretory vesicle</location>
    </subcellularLocation>
    <text>Located in dense granules of tachyzoites. Upon infection, secreted into the parasitophorous vacuole (PV) and targeted to the microvillus membranous network.</text>
</comment>
<comment type="PTM">
    <text evidence="3">O-glycosylated.</text>
</comment>
<keyword id="KW-0968">Cytoplasmic vesicle</keyword>
<keyword id="KW-0325">Glycoprotein</keyword>
<keyword id="KW-0472">Membrane</keyword>
<keyword id="KW-0964">Secreted</keyword>
<keyword id="KW-0732">Signal</keyword>
<keyword id="KW-0812">Transmembrane</keyword>
<keyword id="KW-1133">Transmembrane helix</keyword>
<sequence length="345" mass="36284">MQGTWFSLFVVVMVSHLACGGECSFGSHLADMAGLSGRHDKERHQAKKRYYHSMYGNQTPYPYANGQQASPPPQGQLLIIQNPDGSFMIVDQQGVPQVPQAAGGPGSPMNGGYYMPTGVYTAQVVPGTPGHPVQAIPQQPLRTQATATYYHPAAVPPPGPSVFVFTPSSVQPGAEVTPGYSGLQLRQQSQYGYSYPGTTSTPTPPPPASYGYPVFPAFPRLPAFSDSVSVSTEDSGLTGVKDSSSSESTVTPADEAASESEEGDKTSRKSKVKKGILTGLGVAATLAAAAAAAKAVKGFGGTRTSTAPAEAGKTELDDGYRPPPFNPRPSPYAELLKDLERMRKE</sequence>
<accession>Q27002</accession>
<accession>O15889</accession>
<accession>Q03883</accession>
<name>GRA4_TOXGO</name>
<gene>
    <name type="primary">GRA4</name>
    <name type="synonym">H11</name>
</gene>
<evidence type="ECO:0000255" key="1"/>
<evidence type="ECO:0000256" key="2">
    <source>
        <dbReference type="SAM" id="MobiDB-lite"/>
    </source>
</evidence>
<evidence type="ECO:0000305" key="3"/>
<protein>
    <recommendedName>
        <fullName>Dense granule protein 4</fullName>
        <shortName>Protein GRA 4</shortName>
    </recommendedName>
    <alternativeName>
        <fullName>Antigen H11</fullName>
    </alternativeName>
</protein>
<feature type="signal peptide" evidence="1">
    <location>
        <begin position="1"/>
        <end position="20"/>
    </location>
</feature>
<feature type="chain" id="PRO_0000021369" description="Dense granule protein 4">
    <location>
        <begin position="21"/>
        <end position="345"/>
    </location>
</feature>
<feature type="transmembrane region" description="Helical" evidence="1">
    <location>
        <begin position="276"/>
        <end position="296"/>
    </location>
</feature>
<feature type="region of interest" description="Disordered" evidence="2">
    <location>
        <begin position="227"/>
        <end position="271"/>
    </location>
</feature>
<feature type="region of interest" description="Disordered" evidence="2">
    <location>
        <begin position="298"/>
        <end position="345"/>
    </location>
</feature>
<feature type="compositionally biased region" description="Polar residues" evidence="2">
    <location>
        <begin position="227"/>
        <end position="251"/>
    </location>
</feature>
<feature type="compositionally biased region" description="Pro residues" evidence="2">
    <location>
        <begin position="321"/>
        <end position="330"/>
    </location>
</feature>
<feature type="compositionally biased region" description="Basic and acidic residues" evidence="2">
    <location>
        <begin position="335"/>
        <end position="345"/>
    </location>
</feature>
<feature type="sequence conflict" description="In Ref. 2." evidence="3" ref="2">
    <original>AAA</original>
    <variation>EFP</variation>
    <location>
        <begin position="290"/>
        <end position="292"/>
    </location>
</feature>